<organism>
    <name type="scientific">Shigella boydii serotype 18 (strain CDC 3083-94 / BS512)</name>
    <dbReference type="NCBI Taxonomy" id="344609"/>
    <lineage>
        <taxon>Bacteria</taxon>
        <taxon>Pseudomonadati</taxon>
        <taxon>Pseudomonadota</taxon>
        <taxon>Gammaproteobacteria</taxon>
        <taxon>Enterobacterales</taxon>
        <taxon>Enterobacteriaceae</taxon>
        <taxon>Shigella</taxon>
    </lineage>
</organism>
<reference key="1">
    <citation type="submission" date="2008-05" db="EMBL/GenBank/DDBJ databases">
        <title>Complete sequence of Shigella boydii serotype 18 strain BS512.</title>
        <authorList>
            <person name="Rasko D.A."/>
            <person name="Rosovitz M."/>
            <person name="Maurelli A.T."/>
            <person name="Myers G."/>
            <person name="Seshadri R."/>
            <person name="Cer R."/>
            <person name="Jiang L."/>
            <person name="Ravel J."/>
            <person name="Sebastian Y."/>
        </authorList>
    </citation>
    <scope>NUCLEOTIDE SEQUENCE [LARGE SCALE GENOMIC DNA]</scope>
    <source>
        <strain>CDC 3083-94 / BS512</strain>
    </source>
</reference>
<accession>B2U2S4</accession>
<keyword id="KW-1185">Reference proteome</keyword>
<keyword id="KW-0687">Ribonucleoprotein</keyword>
<keyword id="KW-0689">Ribosomal protein</keyword>
<keyword id="KW-0694">RNA-binding</keyword>
<keyword id="KW-0699">rRNA-binding</keyword>
<name>RS8_SHIB3</name>
<dbReference type="EMBL" id="CP001063">
    <property type="protein sequence ID" value="ACD06947.1"/>
    <property type="molecule type" value="Genomic_DNA"/>
</dbReference>
<dbReference type="RefSeq" id="WP_000062611.1">
    <property type="nucleotide sequence ID" value="NC_010658.1"/>
</dbReference>
<dbReference type="SMR" id="B2U2S4"/>
<dbReference type="STRING" id="344609.SbBS512_E3691"/>
<dbReference type="GeneID" id="93778681"/>
<dbReference type="KEGG" id="sbc:SbBS512_E3691"/>
<dbReference type="HOGENOM" id="CLU_098428_0_0_6"/>
<dbReference type="Proteomes" id="UP000001030">
    <property type="component" value="Chromosome"/>
</dbReference>
<dbReference type="GO" id="GO:1990904">
    <property type="term" value="C:ribonucleoprotein complex"/>
    <property type="evidence" value="ECO:0007669"/>
    <property type="project" value="UniProtKB-KW"/>
</dbReference>
<dbReference type="GO" id="GO:0005840">
    <property type="term" value="C:ribosome"/>
    <property type="evidence" value="ECO:0007669"/>
    <property type="project" value="UniProtKB-KW"/>
</dbReference>
<dbReference type="GO" id="GO:0019843">
    <property type="term" value="F:rRNA binding"/>
    <property type="evidence" value="ECO:0007669"/>
    <property type="project" value="UniProtKB-UniRule"/>
</dbReference>
<dbReference type="GO" id="GO:0003735">
    <property type="term" value="F:structural constituent of ribosome"/>
    <property type="evidence" value="ECO:0007669"/>
    <property type="project" value="InterPro"/>
</dbReference>
<dbReference type="GO" id="GO:0006412">
    <property type="term" value="P:translation"/>
    <property type="evidence" value="ECO:0007669"/>
    <property type="project" value="UniProtKB-UniRule"/>
</dbReference>
<dbReference type="FunFam" id="3.30.1370.30:FF:000003">
    <property type="entry name" value="30S ribosomal protein S8"/>
    <property type="match status" value="1"/>
</dbReference>
<dbReference type="FunFam" id="3.30.1490.10:FF:000001">
    <property type="entry name" value="30S ribosomal protein S8"/>
    <property type="match status" value="1"/>
</dbReference>
<dbReference type="Gene3D" id="3.30.1370.30">
    <property type="match status" value="1"/>
</dbReference>
<dbReference type="Gene3D" id="3.30.1490.10">
    <property type="match status" value="1"/>
</dbReference>
<dbReference type="HAMAP" id="MF_01302_B">
    <property type="entry name" value="Ribosomal_uS8_B"/>
    <property type="match status" value="1"/>
</dbReference>
<dbReference type="InterPro" id="IPR000630">
    <property type="entry name" value="Ribosomal_uS8"/>
</dbReference>
<dbReference type="InterPro" id="IPR047863">
    <property type="entry name" value="Ribosomal_uS8_CS"/>
</dbReference>
<dbReference type="InterPro" id="IPR035987">
    <property type="entry name" value="Ribosomal_uS8_sf"/>
</dbReference>
<dbReference type="NCBIfam" id="NF001109">
    <property type="entry name" value="PRK00136.1"/>
    <property type="match status" value="1"/>
</dbReference>
<dbReference type="PANTHER" id="PTHR11758">
    <property type="entry name" value="40S RIBOSOMAL PROTEIN S15A"/>
    <property type="match status" value="1"/>
</dbReference>
<dbReference type="Pfam" id="PF00410">
    <property type="entry name" value="Ribosomal_S8"/>
    <property type="match status" value="1"/>
</dbReference>
<dbReference type="SUPFAM" id="SSF56047">
    <property type="entry name" value="Ribosomal protein S8"/>
    <property type="match status" value="1"/>
</dbReference>
<dbReference type="PROSITE" id="PS00053">
    <property type="entry name" value="RIBOSOMAL_S8"/>
    <property type="match status" value="1"/>
</dbReference>
<gene>
    <name evidence="1" type="primary">rpsH</name>
    <name type="ordered locus">SbBS512_E3691</name>
</gene>
<evidence type="ECO:0000255" key="1">
    <source>
        <dbReference type="HAMAP-Rule" id="MF_01302"/>
    </source>
</evidence>
<evidence type="ECO:0000305" key="2"/>
<comment type="function">
    <text evidence="1">One of the primary rRNA binding proteins, it binds directly to 16S rRNA central domain where it helps coordinate assembly of the platform of the 30S subunit.</text>
</comment>
<comment type="subunit">
    <text evidence="1">Part of the 30S ribosomal subunit. Contacts proteins S5 and S12.</text>
</comment>
<comment type="similarity">
    <text evidence="1">Belongs to the universal ribosomal protein uS8 family.</text>
</comment>
<sequence length="130" mass="14127">MSMQDPIADMLTRIRNGQAANKAAVTMPSSKLKVAIANVLKEEGFIEDFKVEGDTKPELELTLKYFQGKAVVESIQRVSRPGLRIYKRKDELPKVMAGLGIAVVSTSKGVMTDRAARQAGLGGEIICYVA</sequence>
<feature type="chain" id="PRO_1000140614" description="Small ribosomal subunit protein uS8">
    <location>
        <begin position="1"/>
        <end position="130"/>
    </location>
</feature>
<proteinExistence type="inferred from homology"/>
<protein>
    <recommendedName>
        <fullName evidence="1">Small ribosomal subunit protein uS8</fullName>
    </recommendedName>
    <alternativeName>
        <fullName evidence="2">30S ribosomal protein S8</fullName>
    </alternativeName>
</protein>